<evidence type="ECO:0000255" key="1">
    <source>
        <dbReference type="PROSITE-ProRule" id="PRU00088"/>
    </source>
</evidence>
<evidence type="ECO:0000305" key="2"/>
<evidence type="ECO:0007829" key="3">
    <source>
        <dbReference type="PDB" id="3KAP"/>
    </source>
</evidence>
<evidence type="ECO:0007829" key="4">
    <source>
        <dbReference type="PDB" id="3KAQ"/>
    </source>
</evidence>
<comment type="function">
    <text>Low-potential electron donor to a number of redox enzymes.</text>
</comment>
<comment type="cofactor">
    <cofactor>
        <name>FMN</name>
        <dbReference type="ChEBI" id="CHEBI:58210"/>
    </cofactor>
</comment>
<comment type="biophysicochemical properties">
    <redoxPotential>
        <text>E(0) are -410 mV and -100 mV.</text>
    </redoxPotential>
</comment>
<comment type="similarity">
    <text evidence="2">Belongs to the flavodoxin family.</text>
</comment>
<keyword id="KW-0002">3D-structure</keyword>
<keyword id="KW-0903">Direct protein sequencing</keyword>
<keyword id="KW-0249">Electron transport</keyword>
<keyword id="KW-0285">Flavoprotein</keyword>
<keyword id="KW-0288">FMN</keyword>
<keyword id="KW-0813">Transport</keyword>
<sequence>MSKVLILFGSSTGNTESIAQKLEELVAAGGHEVTLLNAAEASADNLADGYDAVLMGCSAWGMEDLELQDDFAPLFDEMENMGLKGKKLAAFASGDMEYEHYCGAVPAIEEKARGLGAEVICEGLKIEGDASSDPDAVSAFAEDVLKKL</sequence>
<feature type="chain" id="PRO_0000171616" description="Flavodoxin">
    <location>
        <begin position="1"/>
        <end position="148"/>
    </location>
</feature>
<feature type="domain" description="Flavodoxin-like" evidence="1">
    <location>
        <begin position="4"/>
        <end position="145"/>
    </location>
</feature>
<feature type="sequence conflict" description="In Ref. 2; AA sequence." evidence="2" ref="2">
    <original>R</original>
    <variation>Y</variation>
    <location>
        <position position="113"/>
    </location>
</feature>
<feature type="sequence conflict" description="In Ref. 2; AA sequence." evidence="2" ref="2">
    <original>C</original>
    <variation>P</variation>
    <location>
        <position position="121"/>
    </location>
</feature>
<feature type="strand" evidence="3">
    <location>
        <begin position="3"/>
        <end position="9"/>
    </location>
</feature>
<feature type="strand" evidence="3">
    <location>
        <begin position="11"/>
        <end position="13"/>
    </location>
</feature>
<feature type="helix" evidence="3">
    <location>
        <begin position="14"/>
        <end position="28"/>
    </location>
</feature>
<feature type="strand" evidence="3">
    <location>
        <begin position="32"/>
        <end position="37"/>
    </location>
</feature>
<feature type="helix" evidence="3">
    <location>
        <begin position="38"/>
        <end position="40"/>
    </location>
</feature>
<feature type="turn" evidence="3">
    <location>
        <begin position="44"/>
        <end position="49"/>
    </location>
</feature>
<feature type="strand" evidence="3">
    <location>
        <begin position="51"/>
        <end position="57"/>
    </location>
</feature>
<feature type="strand" evidence="4">
    <location>
        <begin position="62"/>
        <end position="64"/>
    </location>
</feature>
<feature type="turn" evidence="3">
    <location>
        <begin position="69"/>
        <end position="71"/>
    </location>
</feature>
<feature type="helix" evidence="3">
    <location>
        <begin position="72"/>
        <end position="76"/>
    </location>
</feature>
<feature type="helix" evidence="3">
    <location>
        <begin position="78"/>
        <end position="80"/>
    </location>
</feature>
<feature type="strand" evidence="3">
    <location>
        <begin position="87"/>
        <end position="94"/>
    </location>
</feature>
<feature type="strand" evidence="3">
    <location>
        <begin position="98"/>
        <end position="100"/>
    </location>
</feature>
<feature type="turn" evidence="3">
    <location>
        <begin position="101"/>
        <end position="103"/>
    </location>
</feature>
<feature type="helix" evidence="3">
    <location>
        <begin position="104"/>
        <end position="114"/>
    </location>
</feature>
<feature type="strand" evidence="3">
    <location>
        <begin position="124"/>
        <end position="128"/>
    </location>
</feature>
<feature type="helix" evidence="3">
    <location>
        <begin position="130"/>
        <end position="132"/>
    </location>
</feature>
<feature type="helix" evidence="3">
    <location>
        <begin position="134"/>
        <end position="147"/>
    </location>
</feature>
<dbReference type="EMBL" id="CP001358">
    <property type="protein sequence ID" value="ACL49847.1"/>
    <property type="molecule type" value="Genomic_DNA"/>
</dbReference>
<dbReference type="PIR" id="S42570">
    <property type="entry name" value="S42570"/>
</dbReference>
<dbReference type="PDB" id="3KAP">
    <property type="method" value="X-ray"/>
    <property type="resolution" value="2.05 A"/>
    <property type="chains" value="A=2-148"/>
</dbReference>
<dbReference type="PDB" id="3KAQ">
    <property type="method" value="X-ray"/>
    <property type="resolution" value="2.25 A"/>
    <property type="chains" value="A=2-148"/>
</dbReference>
<dbReference type="PDBsum" id="3KAP"/>
<dbReference type="PDBsum" id="3KAQ"/>
<dbReference type="SMR" id="P80312"/>
<dbReference type="STRING" id="525146.Ddes_1951"/>
<dbReference type="KEGG" id="dds:Ddes_1951"/>
<dbReference type="eggNOG" id="COG0716">
    <property type="taxonomic scope" value="Bacteria"/>
</dbReference>
<dbReference type="HOGENOM" id="CLU_051402_4_2_7"/>
<dbReference type="EvolutionaryTrace" id="P80312"/>
<dbReference type="GO" id="GO:0009055">
    <property type="term" value="F:electron transfer activity"/>
    <property type="evidence" value="ECO:0007669"/>
    <property type="project" value="InterPro"/>
</dbReference>
<dbReference type="GO" id="GO:0010181">
    <property type="term" value="F:FMN binding"/>
    <property type="evidence" value="ECO:0007669"/>
    <property type="project" value="InterPro"/>
</dbReference>
<dbReference type="Gene3D" id="3.40.50.360">
    <property type="match status" value="1"/>
</dbReference>
<dbReference type="InterPro" id="IPR010087">
    <property type="entry name" value="Flav_short"/>
</dbReference>
<dbReference type="InterPro" id="IPR050619">
    <property type="entry name" value="Flavodoxin"/>
</dbReference>
<dbReference type="InterPro" id="IPR008254">
    <property type="entry name" value="Flavodoxin/NO_synth"/>
</dbReference>
<dbReference type="InterPro" id="IPR001226">
    <property type="entry name" value="Flavodoxin_CS"/>
</dbReference>
<dbReference type="InterPro" id="IPR029039">
    <property type="entry name" value="Flavoprotein-like_sf"/>
</dbReference>
<dbReference type="NCBIfam" id="TIGR01753">
    <property type="entry name" value="flav_short"/>
    <property type="match status" value="1"/>
</dbReference>
<dbReference type="PANTHER" id="PTHR42809:SF1">
    <property type="entry name" value="FLAVODOXIN 1"/>
    <property type="match status" value="1"/>
</dbReference>
<dbReference type="PANTHER" id="PTHR42809">
    <property type="entry name" value="FLAVODOXIN 2"/>
    <property type="match status" value="1"/>
</dbReference>
<dbReference type="Pfam" id="PF00258">
    <property type="entry name" value="Flavodoxin_1"/>
    <property type="match status" value="1"/>
</dbReference>
<dbReference type="SUPFAM" id="SSF52218">
    <property type="entry name" value="Flavoproteins"/>
    <property type="match status" value="1"/>
</dbReference>
<dbReference type="PROSITE" id="PS00201">
    <property type="entry name" value="FLAVODOXIN"/>
    <property type="match status" value="1"/>
</dbReference>
<dbReference type="PROSITE" id="PS50902">
    <property type="entry name" value="FLAVODOXIN_LIKE"/>
    <property type="match status" value="1"/>
</dbReference>
<accession>P80312</accession>
<accession>B8J2S8</accession>
<reference key="1">
    <citation type="submission" date="2009-01" db="EMBL/GenBank/DDBJ databases">
        <title>Complete sequence of Desulfovibrio desulfuricans subsp. desulfuricans str. ATCC 27774.</title>
        <authorList>
            <consortium name="US DOE Joint Genome Institute"/>
            <person name="Lucas S."/>
            <person name="Copeland A."/>
            <person name="Lapidus A."/>
            <person name="Glavina del Rio T."/>
            <person name="Tice H."/>
            <person name="Bruce D."/>
            <person name="Goodwin L."/>
            <person name="Pitluck S."/>
            <person name="Sims D."/>
            <person name="Lu M."/>
            <person name="Kiss H."/>
            <person name="Meineke L."/>
            <person name="Brettin T."/>
            <person name="Detter J.C."/>
            <person name="Han C."/>
            <person name="Larimer F."/>
            <person name="Land M."/>
            <person name="Hauser L."/>
            <person name="Kyrpides N."/>
            <person name="Ovchinnikova G."/>
            <person name="Hazen T.C."/>
        </authorList>
    </citation>
    <scope>NUCLEOTIDE SEQUENCE [LARGE SCALE GENOMIC DNA]</scope>
    <source>
        <strain>ATCC 27774 / DSM 6949 / MB</strain>
    </source>
</reference>
<reference key="2">
    <citation type="journal article" date="1994" name="Eur. J. Biochem.">
        <title>Primary sequence, oxidation-reduction potentials and tertiary-structure prediction of Desulfovibrio desulfuricans ATCC 27774 flavodoxin.</title>
        <authorList>
            <person name="Caldeira J."/>
            <person name="Palma P.N."/>
            <person name="Regalla M."/>
            <person name="Lampreia J."/>
            <person name="Calvete J.J."/>
            <person name="Schaefer W."/>
            <person name="Legall J."/>
            <person name="Moura I."/>
            <person name="Moura J.J.G."/>
        </authorList>
    </citation>
    <scope>PROTEIN SEQUENCE OF 1-146</scope>
</reference>
<proteinExistence type="evidence at protein level"/>
<protein>
    <recommendedName>
        <fullName>Flavodoxin</fullName>
    </recommendedName>
</protein>
<name>FLAW_DESDA</name>
<organism>
    <name type="scientific">Desulfovibrio desulfuricans (strain ATCC 27774 / DSM 6949 / MB)</name>
    <dbReference type="NCBI Taxonomy" id="525146"/>
    <lineage>
        <taxon>Bacteria</taxon>
        <taxon>Pseudomonadati</taxon>
        <taxon>Thermodesulfobacteriota</taxon>
        <taxon>Desulfovibrionia</taxon>
        <taxon>Desulfovibrionales</taxon>
        <taxon>Desulfovibrionaceae</taxon>
        <taxon>Desulfovibrio</taxon>
    </lineage>
</organism>
<gene>
    <name type="ordered locus">Ddes_1951</name>
</gene>